<feature type="chain" id="PRO_1000009287" description="Leucine--tRNA ligase">
    <location>
        <begin position="1"/>
        <end position="858"/>
    </location>
</feature>
<feature type="short sequence motif" description="'HIGH' region">
    <location>
        <begin position="42"/>
        <end position="52"/>
    </location>
</feature>
<feature type="short sequence motif" description="'KMSKS' region">
    <location>
        <begin position="618"/>
        <end position="622"/>
    </location>
</feature>
<feature type="binding site" evidence="1">
    <location>
        <position position="621"/>
    </location>
    <ligand>
        <name>ATP</name>
        <dbReference type="ChEBI" id="CHEBI:30616"/>
    </ligand>
</feature>
<sequence>MQEQYVPQSIEPAVQKHWDAKKTFKAVEKVDKEKFYCLSMFPYPSGRLHMGHVRNYTIGDVISRYQRLNGKNVLQPIGWDAFGLPAENAAVKNNTAPAPWTYENIEYMKNQLKMLGLGYDWDRELATCKPDYYRWEQWFFTKLYEKGLVYKKTSSVNWCPNDMTVLANEQVVDNCCWRCDTPVEQKEIPQWFIKITDYAEELLNDIDNLEGWPEMVKTMQRNWIGRSEGVNISFAIEGQAEQLEVYTTRPDTFMGVTYVGIAAGHPLALQAAATNPGLAAFIEECKNTKVAEAELATMEKKGMATGLYAIHPLDGRKVPVWVANFVLMNYGTGAVMAVPGHDQRDHEFATKYGLDIKAVIKPADGEVDVSDAAYTEKGVLFASGEFDGLDFQGAFDAIANKLEALGHGKRTVNFRLRDWGVSRQRYWGAPIPMLTLADGTVVPTPEDQLPVLLPEDVVMDGIQSPIKADAEWAKTTYNGQEAFRETDTFDTFMESSWYYARYCSPDYDKGMLDPAAANHWLPVDQYIGGIEHACMHLLYARFFHKLLRDAGLVNSDEPFKRLLCQGMVLADAFYYKDEKGGNVWVSPTDVKVERDEKGRITKAIDNDGREVIHSGMTKMSKSKNNGIDPQLMVERYGADTVRLFMMFASPAEMTLEWSDSGVEGAQRFLRRLWRLTFEHVSAGAVPALDVAALTSEQKAVRRELHKTIAKVSDDVGRRQTFNTAIAAIMELMNNLAKLGSDEQDRALMQEALETVVVMLSPITPHIGFELWKMLGKGDDVDHATWPVADEAAMVETEKLVVVQINGKMRGKLTVPAEISQADVEKLAMADASVQKFTDGLTVRKVIYVPGKLLNIVAN</sequence>
<name>SYL_AERS4</name>
<organism>
    <name type="scientific">Aeromonas salmonicida (strain A449)</name>
    <dbReference type="NCBI Taxonomy" id="382245"/>
    <lineage>
        <taxon>Bacteria</taxon>
        <taxon>Pseudomonadati</taxon>
        <taxon>Pseudomonadota</taxon>
        <taxon>Gammaproteobacteria</taxon>
        <taxon>Aeromonadales</taxon>
        <taxon>Aeromonadaceae</taxon>
        <taxon>Aeromonas</taxon>
    </lineage>
</organism>
<protein>
    <recommendedName>
        <fullName evidence="1">Leucine--tRNA ligase</fullName>
        <ecNumber evidence="1">6.1.1.4</ecNumber>
    </recommendedName>
    <alternativeName>
        <fullName evidence="1">Leucyl-tRNA synthetase</fullName>
        <shortName evidence="1">LeuRS</shortName>
    </alternativeName>
</protein>
<reference key="1">
    <citation type="journal article" date="2008" name="BMC Genomics">
        <title>The genome of Aeromonas salmonicida subsp. salmonicida A449: insights into the evolution of a fish pathogen.</title>
        <authorList>
            <person name="Reith M.E."/>
            <person name="Singh R.K."/>
            <person name="Curtis B."/>
            <person name="Boyd J.M."/>
            <person name="Bouevitch A."/>
            <person name="Kimball J."/>
            <person name="Munholland J."/>
            <person name="Murphy C."/>
            <person name="Sarty D."/>
            <person name="Williams J."/>
            <person name="Nash J.H."/>
            <person name="Johnson S.C."/>
            <person name="Brown L.L."/>
        </authorList>
    </citation>
    <scope>NUCLEOTIDE SEQUENCE [LARGE SCALE GENOMIC DNA]</scope>
    <source>
        <strain>A449</strain>
    </source>
</reference>
<evidence type="ECO:0000255" key="1">
    <source>
        <dbReference type="HAMAP-Rule" id="MF_00049"/>
    </source>
</evidence>
<keyword id="KW-0030">Aminoacyl-tRNA synthetase</keyword>
<keyword id="KW-0067">ATP-binding</keyword>
<keyword id="KW-0963">Cytoplasm</keyword>
<keyword id="KW-0436">Ligase</keyword>
<keyword id="KW-0547">Nucleotide-binding</keyword>
<keyword id="KW-0648">Protein biosynthesis</keyword>
<dbReference type="EC" id="6.1.1.4" evidence="1"/>
<dbReference type="EMBL" id="CP000644">
    <property type="protein sequence ID" value="ABO89190.1"/>
    <property type="molecule type" value="Genomic_DNA"/>
</dbReference>
<dbReference type="RefSeq" id="WP_005317327.1">
    <property type="nucleotide sequence ID" value="NC_009348.1"/>
</dbReference>
<dbReference type="SMR" id="A4SJW8"/>
<dbReference type="STRING" id="29491.GCA_000820065_02569"/>
<dbReference type="KEGG" id="asa:ASA_1068"/>
<dbReference type="eggNOG" id="COG0495">
    <property type="taxonomic scope" value="Bacteria"/>
</dbReference>
<dbReference type="HOGENOM" id="CLU_004427_0_0_6"/>
<dbReference type="Proteomes" id="UP000000225">
    <property type="component" value="Chromosome"/>
</dbReference>
<dbReference type="GO" id="GO:0005829">
    <property type="term" value="C:cytosol"/>
    <property type="evidence" value="ECO:0007669"/>
    <property type="project" value="TreeGrafter"/>
</dbReference>
<dbReference type="GO" id="GO:0002161">
    <property type="term" value="F:aminoacyl-tRNA deacylase activity"/>
    <property type="evidence" value="ECO:0007669"/>
    <property type="project" value="InterPro"/>
</dbReference>
<dbReference type="GO" id="GO:0005524">
    <property type="term" value="F:ATP binding"/>
    <property type="evidence" value="ECO:0007669"/>
    <property type="project" value="UniProtKB-UniRule"/>
</dbReference>
<dbReference type="GO" id="GO:0004823">
    <property type="term" value="F:leucine-tRNA ligase activity"/>
    <property type="evidence" value="ECO:0007669"/>
    <property type="project" value="UniProtKB-UniRule"/>
</dbReference>
<dbReference type="GO" id="GO:0006429">
    <property type="term" value="P:leucyl-tRNA aminoacylation"/>
    <property type="evidence" value="ECO:0007669"/>
    <property type="project" value="UniProtKB-UniRule"/>
</dbReference>
<dbReference type="CDD" id="cd07958">
    <property type="entry name" value="Anticodon_Ia_Leu_BEm"/>
    <property type="match status" value="1"/>
</dbReference>
<dbReference type="CDD" id="cd00812">
    <property type="entry name" value="LeuRS_core"/>
    <property type="match status" value="1"/>
</dbReference>
<dbReference type="FunFam" id="1.10.730.10:FF:000002">
    <property type="entry name" value="Leucine--tRNA ligase"/>
    <property type="match status" value="1"/>
</dbReference>
<dbReference type="FunFam" id="2.20.28.290:FF:000001">
    <property type="entry name" value="Leucine--tRNA ligase"/>
    <property type="match status" value="1"/>
</dbReference>
<dbReference type="FunFam" id="3.10.20.590:FF:000001">
    <property type="entry name" value="Leucine--tRNA ligase"/>
    <property type="match status" value="1"/>
</dbReference>
<dbReference type="FunFam" id="3.40.50.620:FF:000003">
    <property type="entry name" value="Leucine--tRNA ligase"/>
    <property type="match status" value="1"/>
</dbReference>
<dbReference type="FunFam" id="3.40.50.620:FF:000051">
    <property type="entry name" value="Leucine--tRNA ligase"/>
    <property type="match status" value="1"/>
</dbReference>
<dbReference type="FunFam" id="3.90.740.10:FF:000012">
    <property type="entry name" value="Leucine--tRNA ligase"/>
    <property type="match status" value="1"/>
</dbReference>
<dbReference type="Gene3D" id="2.20.28.290">
    <property type="match status" value="1"/>
</dbReference>
<dbReference type="Gene3D" id="3.10.20.590">
    <property type="match status" value="1"/>
</dbReference>
<dbReference type="Gene3D" id="3.40.50.620">
    <property type="entry name" value="HUPs"/>
    <property type="match status" value="2"/>
</dbReference>
<dbReference type="Gene3D" id="1.10.730.10">
    <property type="entry name" value="Isoleucyl-tRNA Synthetase, Domain 1"/>
    <property type="match status" value="1"/>
</dbReference>
<dbReference type="Gene3D" id="3.90.740.10">
    <property type="entry name" value="Valyl/Leucyl/Isoleucyl-tRNA synthetase, editing domain"/>
    <property type="match status" value="1"/>
</dbReference>
<dbReference type="HAMAP" id="MF_00049_B">
    <property type="entry name" value="Leu_tRNA_synth_B"/>
    <property type="match status" value="1"/>
</dbReference>
<dbReference type="InterPro" id="IPR001412">
    <property type="entry name" value="aa-tRNA-synth_I_CS"/>
</dbReference>
<dbReference type="InterPro" id="IPR002300">
    <property type="entry name" value="aa-tRNA-synth_Ia"/>
</dbReference>
<dbReference type="InterPro" id="IPR002302">
    <property type="entry name" value="Leu-tRNA-ligase"/>
</dbReference>
<dbReference type="InterPro" id="IPR025709">
    <property type="entry name" value="Leu_tRNA-synth_edit"/>
</dbReference>
<dbReference type="InterPro" id="IPR013155">
    <property type="entry name" value="M/V/L/I-tRNA-synth_anticd-bd"/>
</dbReference>
<dbReference type="InterPro" id="IPR015413">
    <property type="entry name" value="Methionyl/Leucyl_tRNA_Synth"/>
</dbReference>
<dbReference type="InterPro" id="IPR014729">
    <property type="entry name" value="Rossmann-like_a/b/a_fold"/>
</dbReference>
<dbReference type="InterPro" id="IPR009080">
    <property type="entry name" value="tRNAsynth_Ia_anticodon-bd"/>
</dbReference>
<dbReference type="InterPro" id="IPR009008">
    <property type="entry name" value="Val/Leu/Ile-tRNA-synth_edit"/>
</dbReference>
<dbReference type="NCBIfam" id="TIGR00396">
    <property type="entry name" value="leuS_bact"/>
    <property type="match status" value="1"/>
</dbReference>
<dbReference type="PANTHER" id="PTHR43740:SF2">
    <property type="entry name" value="LEUCINE--TRNA LIGASE, MITOCHONDRIAL"/>
    <property type="match status" value="1"/>
</dbReference>
<dbReference type="PANTHER" id="PTHR43740">
    <property type="entry name" value="LEUCYL-TRNA SYNTHETASE"/>
    <property type="match status" value="1"/>
</dbReference>
<dbReference type="Pfam" id="PF08264">
    <property type="entry name" value="Anticodon_1"/>
    <property type="match status" value="1"/>
</dbReference>
<dbReference type="Pfam" id="PF00133">
    <property type="entry name" value="tRNA-synt_1"/>
    <property type="match status" value="2"/>
</dbReference>
<dbReference type="Pfam" id="PF13603">
    <property type="entry name" value="tRNA-synt_1_2"/>
    <property type="match status" value="1"/>
</dbReference>
<dbReference type="Pfam" id="PF09334">
    <property type="entry name" value="tRNA-synt_1g"/>
    <property type="match status" value="1"/>
</dbReference>
<dbReference type="PRINTS" id="PR00985">
    <property type="entry name" value="TRNASYNTHLEU"/>
</dbReference>
<dbReference type="SUPFAM" id="SSF47323">
    <property type="entry name" value="Anticodon-binding domain of a subclass of class I aminoacyl-tRNA synthetases"/>
    <property type="match status" value="1"/>
</dbReference>
<dbReference type="SUPFAM" id="SSF52374">
    <property type="entry name" value="Nucleotidylyl transferase"/>
    <property type="match status" value="1"/>
</dbReference>
<dbReference type="SUPFAM" id="SSF50677">
    <property type="entry name" value="ValRS/IleRS/LeuRS editing domain"/>
    <property type="match status" value="1"/>
</dbReference>
<dbReference type="PROSITE" id="PS00178">
    <property type="entry name" value="AA_TRNA_LIGASE_I"/>
    <property type="match status" value="1"/>
</dbReference>
<comment type="catalytic activity">
    <reaction evidence="1">
        <text>tRNA(Leu) + L-leucine + ATP = L-leucyl-tRNA(Leu) + AMP + diphosphate</text>
        <dbReference type="Rhea" id="RHEA:11688"/>
        <dbReference type="Rhea" id="RHEA-COMP:9613"/>
        <dbReference type="Rhea" id="RHEA-COMP:9622"/>
        <dbReference type="ChEBI" id="CHEBI:30616"/>
        <dbReference type="ChEBI" id="CHEBI:33019"/>
        <dbReference type="ChEBI" id="CHEBI:57427"/>
        <dbReference type="ChEBI" id="CHEBI:78442"/>
        <dbReference type="ChEBI" id="CHEBI:78494"/>
        <dbReference type="ChEBI" id="CHEBI:456215"/>
        <dbReference type="EC" id="6.1.1.4"/>
    </reaction>
</comment>
<comment type="subcellular location">
    <subcellularLocation>
        <location evidence="1">Cytoplasm</location>
    </subcellularLocation>
</comment>
<comment type="similarity">
    <text evidence="1">Belongs to the class-I aminoacyl-tRNA synthetase family.</text>
</comment>
<accession>A4SJW8</accession>
<gene>
    <name evidence="1" type="primary">leuS</name>
    <name type="ordered locus">ASA_1068</name>
</gene>
<proteinExistence type="inferred from homology"/>